<dbReference type="EMBL" id="DQ447649">
    <property type="protein sequence ID" value="ABE27072.1"/>
    <property type="molecule type" value="Genomic_RNA"/>
</dbReference>
<dbReference type="SMR" id="Q1PDC6"/>
<dbReference type="Proteomes" id="UP000008239">
    <property type="component" value="Genome"/>
</dbReference>
<dbReference type="GO" id="GO:0030430">
    <property type="term" value="C:host cell cytoplasm"/>
    <property type="evidence" value="ECO:0007669"/>
    <property type="project" value="UniProtKB-SubCell"/>
</dbReference>
<dbReference type="GO" id="GO:0019013">
    <property type="term" value="C:viral nucleocapsid"/>
    <property type="evidence" value="ECO:0007669"/>
    <property type="project" value="UniProtKB-KW"/>
</dbReference>
<dbReference type="GO" id="GO:0003723">
    <property type="term" value="F:RNA binding"/>
    <property type="evidence" value="ECO:0007669"/>
    <property type="project" value="InterPro"/>
</dbReference>
<dbReference type="GO" id="GO:0008270">
    <property type="term" value="F:zinc ion binding"/>
    <property type="evidence" value="ECO:0007669"/>
    <property type="project" value="UniProtKB-KW"/>
</dbReference>
<dbReference type="FunFam" id="1.20.120.1160:FF:000001">
    <property type="entry name" value="Minor nucleoprotein VP30"/>
    <property type="match status" value="1"/>
</dbReference>
<dbReference type="Gene3D" id="1.20.120.1160">
    <property type="match status" value="1"/>
</dbReference>
<dbReference type="InterPro" id="IPR014459">
    <property type="entry name" value="VP30_FiloV"/>
</dbReference>
<dbReference type="Pfam" id="PF11507">
    <property type="entry name" value="Transcript_VP30"/>
    <property type="match status" value="1"/>
</dbReference>
<dbReference type="PIRSF" id="PIRSF011356">
    <property type="entry name" value="VP30_FiloV"/>
    <property type="match status" value="1"/>
</dbReference>
<keyword id="KW-1035">Host cytoplasm</keyword>
<keyword id="KW-0479">Metal-binding</keyword>
<keyword id="KW-0597">Phosphoprotein</keyword>
<keyword id="KW-0804">Transcription</keyword>
<keyword id="KW-0543">Viral nucleoprotein</keyword>
<keyword id="KW-0946">Virion</keyword>
<keyword id="KW-0862">Zinc</keyword>
<keyword id="KW-0863">Zinc-finger</keyword>
<reference key="1">
    <citation type="journal article" date="2006" name="J. Virol.">
        <title>Marburgvirus genomics and association with a large hemorrhagic fever outbreak in Angola.</title>
        <authorList>
            <person name="Towner J.S."/>
            <person name="Khristova M.L."/>
            <person name="Sealy T.K."/>
            <person name="Vincent M.J."/>
            <person name="Erickson B.R."/>
            <person name="Bawiec D.A."/>
            <person name="Hartman A.L."/>
            <person name="Comer J.A."/>
            <person name="Zaki S.R."/>
            <person name="Stroeher U."/>
            <person name="Gomes da Silva F."/>
            <person name="del Castillo F."/>
            <person name="Rollin P.E."/>
            <person name="Ksiazek T.G."/>
            <person name="Nichol S.T."/>
        </authorList>
    </citation>
    <scope>NUCLEOTIDE SEQUENCE [GENOMIC RNA]</scope>
</reference>
<sequence length="281" mass="31629">MQQPRGRSRNRSHQVALSTYHENQLPSKPQYINHHPRARSMSSTRSSTEGSPTNHASRARPLSTFNLSKPPPPPKDMCRNMKIGLPCTDPACNRDHDLDNLTNRELLLLMARKMLPNTDKAFKSQQDCGSPSLSKGLSKDKQEQAKDVLTLENLGHILNYLHRSEIGKLDETSLRAALSLTCAGIRKTNRSLINTMTELHINHENLPQDQNGVIKQTYTGIHLDKGGQFEAALWQGWDKKSISLFVQAALYVMNNIPCESSISVQASYDHFILPRNQGERQ</sequence>
<gene>
    <name type="primary">VP30</name>
</gene>
<evidence type="ECO:0000250" key="1"/>
<evidence type="ECO:0000250" key="2">
    <source>
        <dbReference type="UniProtKB" id="Q05323"/>
    </source>
</evidence>
<evidence type="ECO:0000256" key="3">
    <source>
        <dbReference type="SAM" id="MobiDB-lite"/>
    </source>
</evidence>
<evidence type="ECO:0000305" key="4"/>
<protein>
    <recommendedName>
        <fullName evidence="2">Transcriptional activator VP30</fullName>
    </recommendedName>
    <alternativeName>
        <fullName>Minor nucleoprotein VP30</fullName>
    </alternativeName>
</protein>
<proteinExistence type="inferred from homology"/>
<comment type="function">
    <text evidence="1">Acts as a transcription anti-termination factor immediately after transcription initiation, but does not affect transcription elongation. This function has been found to be dependent on the formation of an RNA secondary structure at the transcription start site of the first gene (By similarity).</text>
</comment>
<comment type="subunit">
    <text evidence="1">Homooligomer.</text>
</comment>
<comment type="subcellular location">
    <subcellularLocation>
        <location>Virion</location>
    </subcellularLocation>
    <subcellularLocation>
        <location evidence="1">Host cytoplasm</location>
    </subcellularLocation>
    <text>Tightly bound in the nucleocapsid.</text>
</comment>
<comment type="PTM">
    <text evidence="1">Phosphorylated by host. Phosphorylation negatively regulates the transcription activation (By similarity).</text>
</comment>
<comment type="similarity">
    <text evidence="4">Belongs to the filoviridae transcriptional activator VP30 family.</text>
</comment>
<feature type="chain" id="PRO_0000314994" description="Transcriptional activator VP30">
    <location>
        <begin position="1"/>
        <end position="281"/>
    </location>
</feature>
<feature type="zinc finger region" description="C3H1-type; atypical" evidence="1">
    <location>
        <begin position="78"/>
        <end position="96"/>
    </location>
</feature>
<feature type="region of interest" description="Disordered" evidence="3">
    <location>
        <begin position="1"/>
        <end position="74"/>
    </location>
</feature>
<feature type="region of interest" description="Disordered" evidence="3">
    <location>
        <begin position="120"/>
        <end position="141"/>
    </location>
</feature>
<feature type="compositionally biased region" description="Basic residues" evidence="3">
    <location>
        <begin position="1"/>
        <end position="12"/>
    </location>
</feature>
<feature type="compositionally biased region" description="Polar residues" evidence="3">
    <location>
        <begin position="13"/>
        <end position="27"/>
    </location>
</feature>
<feature type="compositionally biased region" description="Low complexity" evidence="3">
    <location>
        <begin position="39"/>
        <end position="53"/>
    </location>
</feature>
<feature type="compositionally biased region" description="Polar residues" evidence="3">
    <location>
        <begin position="123"/>
        <end position="135"/>
    </location>
</feature>
<organism>
    <name type="scientific">Lake Victoria marburgvirus (strain Ravn-87)</name>
    <name type="common">MARV</name>
    <name type="synonym">Marburg virus (strain Kenya/Ravn/1987)</name>
    <dbReference type="NCBI Taxonomy" id="378809"/>
    <lineage>
        <taxon>Viruses</taxon>
        <taxon>Riboviria</taxon>
        <taxon>Orthornavirae</taxon>
        <taxon>Negarnaviricota</taxon>
        <taxon>Haploviricotina</taxon>
        <taxon>Monjiviricetes</taxon>
        <taxon>Mononegavirales</taxon>
        <taxon>Filoviridae</taxon>
        <taxon>Orthomarburgvirus</taxon>
        <taxon>Orthomarburgvirus marburgense</taxon>
    </lineage>
</organism>
<organismHost>
    <name type="scientific">Chlorocebus aethiops</name>
    <name type="common">Green monkey</name>
    <name type="synonym">Cercopithecus aethiops</name>
    <dbReference type="NCBI Taxonomy" id="9534"/>
</organismHost>
<organismHost>
    <name type="scientific">Homo sapiens</name>
    <name type="common">Human</name>
    <dbReference type="NCBI Taxonomy" id="9606"/>
</organismHost>
<organismHost>
    <name type="scientific">Rousettus aegyptiacus</name>
    <name type="common">Egyptian fruit bat</name>
    <name type="synonym">Pteropus aegyptiacus</name>
    <dbReference type="NCBI Taxonomy" id="9407"/>
</organismHost>
<name>VP30_MABVR</name>
<accession>Q1PDC6</accession>